<organism>
    <name type="scientific">Teredinibacter turnerae (strain ATCC 39867 / T7901)</name>
    <dbReference type="NCBI Taxonomy" id="377629"/>
    <lineage>
        <taxon>Bacteria</taxon>
        <taxon>Pseudomonadati</taxon>
        <taxon>Pseudomonadota</taxon>
        <taxon>Gammaproteobacteria</taxon>
        <taxon>Cellvibrionales</taxon>
        <taxon>Cellvibrionaceae</taxon>
        <taxon>Teredinibacter</taxon>
    </lineage>
</organism>
<reference key="1">
    <citation type="journal article" date="2009" name="PLoS ONE">
        <title>The complete genome of Teredinibacter turnerae T7901: an intracellular endosymbiont of marine wood-boring bivalves (shipworms).</title>
        <authorList>
            <person name="Yang J.C."/>
            <person name="Madupu R."/>
            <person name="Durkin A.S."/>
            <person name="Ekborg N.A."/>
            <person name="Pedamallu C.S."/>
            <person name="Hostetler J.B."/>
            <person name="Radune D."/>
            <person name="Toms B.S."/>
            <person name="Henrissat B."/>
            <person name="Coutinho P.M."/>
            <person name="Schwarz S."/>
            <person name="Field L."/>
            <person name="Trindade-Silva A.E."/>
            <person name="Soares C.A.G."/>
            <person name="Elshahawi S."/>
            <person name="Hanora A."/>
            <person name="Schmidt E.W."/>
            <person name="Haygood M.G."/>
            <person name="Posfai J."/>
            <person name="Benner J."/>
            <person name="Madinger C."/>
            <person name="Nove J."/>
            <person name="Anton B."/>
            <person name="Chaudhary K."/>
            <person name="Foster J."/>
            <person name="Holman A."/>
            <person name="Kumar S."/>
            <person name="Lessard P.A."/>
            <person name="Luyten Y.A."/>
            <person name="Slatko B."/>
            <person name="Wood N."/>
            <person name="Wu B."/>
            <person name="Teplitski M."/>
            <person name="Mougous J.D."/>
            <person name="Ward N."/>
            <person name="Eisen J.A."/>
            <person name="Badger J.H."/>
            <person name="Distel D.L."/>
        </authorList>
    </citation>
    <scope>NUCLEOTIDE SEQUENCE [LARGE SCALE GENOMIC DNA]</scope>
    <source>
        <strain>ATCC 39867 / T7901</strain>
    </source>
</reference>
<comment type="function">
    <text evidence="1">The key enzymatic reactions in nitrogen fixation are catalyzed by the nitrogenase complex, which has 2 components: the iron protein and the molybdenum-iron protein.</text>
</comment>
<comment type="catalytic activity">
    <reaction evidence="1">
        <text>N2 + 8 reduced [2Fe-2S]-[ferredoxin] + 16 ATP + 16 H2O = H2 + 8 oxidized [2Fe-2S]-[ferredoxin] + 2 NH4(+) + 16 ADP + 16 phosphate + 6 H(+)</text>
        <dbReference type="Rhea" id="RHEA:21448"/>
        <dbReference type="Rhea" id="RHEA-COMP:10000"/>
        <dbReference type="Rhea" id="RHEA-COMP:10001"/>
        <dbReference type="ChEBI" id="CHEBI:15377"/>
        <dbReference type="ChEBI" id="CHEBI:15378"/>
        <dbReference type="ChEBI" id="CHEBI:17997"/>
        <dbReference type="ChEBI" id="CHEBI:18276"/>
        <dbReference type="ChEBI" id="CHEBI:28938"/>
        <dbReference type="ChEBI" id="CHEBI:30616"/>
        <dbReference type="ChEBI" id="CHEBI:33737"/>
        <dbReference type="ChEBI" id="CHEBI:33738"/>
        <dbReference type="ChEBI" id="CHEBI:43474"/>
        <dbReference type="ChEBI" id="CHEBI:456216"/>
        <dbReference type="EC" id="1.18.6.1"/>
    </reaction>
</comment>
<comment type="cofactor">
    <cofactor evidence="1">
        <name>[4Fe-4S] cluster</name>
        <dbReference type="ChEBI" id="CHEBI:49883"/>
    </cofactor>
    <text evidence="1">Binds 1 [4Fe-4S] cluster per dimer.</text>
</comment>
<comment type="subunit">
    <text evidence="1">Homodimer.</text>
</comment>
<comment type="PTM">
    <text evidence="1">The reversible ADP-ribosylation of Arg-101 inactivates the nitrogenase reductase and regulates nitrogenase activity.</text>
</comment>
<comment type="similarity">
    <text evidence="1">Belongs to the NifH/BchL/ChlL family.</text>
</comment>
<keyword id="KW-0004">4Fe-4S</keyword>
<keyword id="KW-0013">ADP-ribosylation</keyword>
<keyword id="KW-0067">ATP-binding</keyword>
<keyword id="KW-0408">Iron</keyword>
<keyword id="KW-0411">Iron-sulfur</keyword>
<keyword id="KW-0479">Metal-binding</keyword>
<keyword id="KW-0535">Nitrogen fixation</keyword>
<keyword id="KW-0547">Nucleotide-binding</keyword>
<keyword id="KW-0560">Oxidoreductase</keyword>
<keyword id="KW-1185">Reference proteome</keyword>
<sequence>MAMRQCAIYGKGGIGKSTTTQNLVAALAEAGKKVMIVGCDPKADSTRLILHAKAQNTIMEMAAEAGTVEDLELEDVLKVGYGDVKCVESGGPEPGVGCAGRGVITAINFLEEEGAYEDDLDFVFYDVLGDVVCGGFAMPIRENKAQEIYIVVSGEMMAMYAANNISKGIVKYANSGGVRLAGLICNSRNTDREDELIIALAERLGTQMIHFIPRDNVVQRAEIRRMTCIEYDPAAKQSDEYRELAQKIISNEKLVIPTPVTMDELEELLMDFGILEEEDESVIGKTAAELEA</sequence>
<feature type="chain" id="PRO_1000211892" description="Nitrogenase iron protein">
    <location>
        <begin position="1"/>
        <end position="292"/>
    </location>
</feature>
<feature type="binding site" evidence="1">
    <location>
        <begin position="10"/>
        <end position="17"/>
    </location>
    <ligand>
        <name>ATP</name>
        <dbReference type="ChEBI" id="CHEBI:30616"/>
    </ligand>
</feature>
<feature type="binding site" evidence="1">
    <location>
        <position position="98"/>
    </location>
    <ligand>
        <name>[4Fe-4S] cluster</name>
        <dbReference type="ChEBI" id="CHEBI:49883"/>
        <note>ligand shared between dimeric partners</note>
    </ligand>
</feature>
<feature type="binding site" evidence="1">
    <location>
        <position position="133"/>
    </location>
    <ligand>
        <name>[4Fe-4S] cluster</name>
        <dbReference type="ChEBI" id="CHEBI:49883"/>
        <note>ligand shared between dimeric partners</note>
    </ligand>
</feature>
<feature type="modified residue" description="ADP-ribosylarginine; by dinitrogenase reductase ADP-ribosyltransferase" evidence="1">
    <location>
        <position position="101"/>
    </location>
</feature>
<dbReference type="EC" id="1.18.6.1" evidence="1"/>
<dbReference type="EMBL" id="CP001614">
    <property type="protein sequence ID" value="ACR12580.1"/>
    <property type="molecule type" value="Genomic_DNA"/>
</dbReference>
<dbReference type="RefSeq" id="WP_015818692.1">
    <property type="nucleotide sequence ID" value="NC_012997.1"/>
</dbReference>
<dbReference type="SMR" id="C5BTB0"/>
<dbReference type="STRING" id="377629.TERTU_1537"/>
<dbReference type="KEGG" id="ttu:TERTU_1537"/>
<dbReference type="eggNOG" id="COG1348">
    <property type="taxonomic scope" value="Bacteria"/>
</dbReference>
<dbReference type="HOGENOM" id="CLU_059373_0_0_6"/>
<dbReference type="OrthoDB" id="9815116at2"/>
<dbReference type="Proteomes" id="UP000009080">
    <property type="component" value="Chromosome"/>
</dbReference>
<dbReference type="GO" id="GO:0051539">
    <property type="term" value="F:4 iron, 4 sulfur cluster binding"/>
    <property type="evidence" value="ECO:0007669"/>
    <property type="project" value="UniProtKB-KW"/>
</dbReference>
<dbReference type="GO" id="GO:0005524">
    <property type="term" value="F:ATP binding"/>
    <property type="evidence" value="ECO:0007669"/>
    <property type="project" value="UniProtKB-UniRule"/>
</dbReference>
<dbReference type="GO" id="GO:0046872">
    <property type="term" value="F:metal ion binding"/>
    <property type="evidence" value="ECO:0007669"/>
    <property type="project" value="UniProtKB-KW"/>
</dbReference>
<dbReference type="GO" id="GO:0016163">
    <property type="term" value="F:nitrogenase activity"/>
    <property type="evidence" value="ECO:0007669"/>
    <property type="project" value="UniProtKB-UniRule"/>
</dbReference>
<dbReference type="GO" id="GO:0009399">
    <property type="term" value="P:nitrogen fixation"/>
    <property type="evidence" value="ECO:0007669"/>
    <property type="project" value="UniProtKB-UniRule"/>
</dbReference>
<dbReference type="CDD" id="cd02040">
    <property type="entry name" value="NifH"/>
    <property type="match status" value="1"/>
</dbReference>
<dbReference type="FunFam" id="3.40.50.300:FF:001379">
    <property type="entry name" value="Nitrogenase iron protein 1"/>
    <property type="match status" value="1"/>
</dbReference>
<dbReference type="Gene3D" id="3.40.50.300">
    <property type="entry name" value="P-loop containing nucleotide triphosphate hydrolases"/>
    <property type="match status" value="1"/>
</dbReference>
<dbReference type="HAMAP" id="MF_00533">
    <property type="entry name" value="NifH"/>
    <property type="match status" value="1"/>
</dbReference>
<dbReference type="InterPro" id="IPR030655">
    <property type="entry name" value="NifH/chlL_CS"/>
</dbReference>
<dbReference type="InterPro" id="IPR000392">
    <property type="entry name" value="NifH/frxC"/>
</dbReference>
<dbReference type="InterPro" id="IPR005977">
    <property type="entry name" value="Nitrogenase_Fe_NifH"/>
</dbReference>
<dbReference type="InterPro" id="IPR027417">
    <property type="entry name" value="P-loop_NTPase"/>
</dbReference>
<dbReference type="NCBIfam" id="TIGR01287">
    <property type="entry name" value="nifH"/>
    <property type="match status" value="1"/>
</dbReference>
<dbReference type="PANTHER" id="PTHR42864">
    <property type="entry name" value="LIGHT-INDEPENDENT PROTOCHLOROPHYLLIDE REDUCTASE IRON-SULFUR ATP-BINDING PROTEIN"/>
    <property type="match status" value="1"/>
</dbReference>
<dbReference type="PANTHER" id="PTHR42864:SF2">
    <property type="entry name" value="LIGHT-INDEPENDENT PROTOCHLOROPHYLLIDE REDUCTASE IRON-SULFUR ATP-BINDING PROTEIN"/>
    <property type="match status" value="1"/>
</dbReference>
<dbReference type="Pfam" id="PF00142">
    <property type="entry name" value="Fer4_NifH"/>
    <property type="match status" value="1"/>
</dbReference>
<dbReference type="PIRSF" id="PIRSF000363">
    <property type="entry name" value="Nitrogenase_iron"/>
    <property type="match status" value="1"/>
</dbReference>
<dbReference type="PRINTS" id="PR00091">
    <property type="entry name" value="NITROGNASEII"/>
</dbReference>
<dbReference type="SUPFAM" id="SSF52540">
    <property type="entry name" value="P-loop containing nucleoside triphosphate hydrolases"/>
    <property type="match status" value="1"/>
</dbReference>
<dbReference type="PROSITE" id="PS00746">
    <property type="entry name" value="NIFH_FRXC_1"/>
    <property type="match status" value="1"/>
</dbReference>
<dbReference type="PROSITE" id="PS00692">
    <property type="entry name" value="NIFH_FRXC_2"/>
    <property type="match status" value="1"/>
</dbReference>
<dbReference type="PROSITE" id="PS51026">
    <property type="entry name" value="NIFH_FRXC_3"/>
    <property type="match status" value="1"/>
</dbReference>
<accession>C5BTB0</accession>
<name>NIFH_TERTT</name>
<evidence type="ECO:0000255" key="1">
    <source>
        <dbReference type="HAMAP-Rule" id="MF_00533"/>
    </source>
</evidence>
<protein>
    <recommendedName>
        <fullName evidence="1">Nitrogenase iron protein</fullName>
        <ecNumber evidence="1">1.18.6.1</ecNumber>
    </recommendedName>
    <alternativeName>
        <fullName evidence="1">Nitrogenase Fe protein</fullName>
    </alternativeName>
    <alternativeName>
        <fullName evidence="1">Nitrogenase component II</fullName>
    </alternativeName>
    <alternativeName>
        <fullName evidence="1">Nitrogenase reductase</fullName>
    </alternativeName>
</protein>
<gene>
    <name evidence="1" type="primary">nifH</name>
    <name type="ordered locus">TERTU_1537</name>
</gene>
<proteinExistence type="inferred from homology"/>